<keyword id="KW-0002">3D-structure</keyword>
<keyword id="KW-0066">ATP synthesis</keyword>
<keyword id="KW-1003">Cell membrane</keyword>
<keyword id="KW-0375">Hydrogen ion transport</keyword>
<keyword id="KW-0406">Ion transport</keyword>
<keyword id="KW-0472">Membrane</keyword>
<keyword id="KW-0813">Transport</keyword>
<gene>
    <name evidence="1" type="primary">atpF</name>
    <name evidence="3" type="synonym">ahaF</name>
    <name type="ordered locus">MM_0781</name>
</gene>
<dbReference type="EMBL" id="U47274">
    <property type="protein sequence ID" value="AAC06374.1"/>
    <property type="molecule type" value="Genomic_DNA"/>
</dbReference>
<dbReference type="EMBL" id="AE008384">
    <property type="protein sequence ID" value="AAM30477.1"/>
    <property type="molecule type" value="Genomic_DNA"/>
</dbReference>
<dbReference type="PIR" id="T45106">
    <property type="entry name" value="T45106"/>
</dbReference>
<dbReference type="RefSeq" id="WP_011032731.1">
    <property type="nucleotide sequence ID" value="NC_003901.1"/>
</dbReference>
<dbReference type="PDB" id="2OV6">
    <property type="method" value="NMR"/>
    <property type="chains" value="A=1-101"/>
</dbReference>
<dbReference type="PDBsum" id="2OV6"/>
<dbReference type="BMRB" id="Q60185"/>
<dbReference type="SMR" id="Q60185"/>
<dbReference type="TCDB" id="3.A.2.3.1">
    <property type="family name" value="the h+- or na+-translocating f-type, v-type and a-type atpase (f-atpase) superfamily"/>
</dbReference>
<dbReference type="KEGG" id="mma:MM_0781"/>
<dbReference type="PATRIC" id="fig|192952.21.peg.929"/>
<dbReference type="eggNOG" id="arCOG04102">
    <property type="taxonomic scope" value="Archaea"/>
</dbReference>
<dbReference type="HOGENOM" id="CLU_135754_2_2_2"/>
<dbReference type="EvolutionaryTrace" id="Q60185"/>
<dbReference type="Proteomes" id="UP000000595">
    <property type="component" value="Chromosome"/>
</dbReference>
<dbReference type="GO" id="GO:0005886">
    <property type="term" value="C:plasma membrane"/>
    <property type="evidence" value="ECO:0007669"/>
    <property type="project" value="UniProtKB-SubCell"/>
</dbReference>
<dbReference type="GO" id="GO:0005524">
    <property type="term" value="F:ATP binding"/>
    <property type="evidence" value="ECO:0007669"/>
    <property type="project" value="UniProtKB-UniRule"/>
</dbReference>
<dbReference type="GO" id="GO:0046933">
    <property type="term" value="F:proton-transporting ATP synthase activity, rotational mechanism"/>
    <property type="evidence" value="ECO:0007669"/>
    <property type="project" value="UniProtKB-UniRule"/>
</dbReference>
<dbReference type="GO" id="GO:0046961">
    <property type="term" value="F:proton-transporting ATPase activity, rotational mechanism"/>
    <property type="evidence" value="ECO:0007669"/>
    <property type="project" value="InterPro"/>
</dbReference>
<dbReference type="GO" id="GO:0042777">
    <property type="term" value="P:proton motive force-driven plasma membrane ATP synthesis"/>
    <property type="evidence" value="ECO:0007669"/>
    <property type="project" value="UniProtKB-UniRule"/>
</dbReference>
<dbReference type="Gene3D" id="3.40.50.10580">
    <property type="entry name" value="ATPase, V1 complex, subunit F"/>
    <property type="match status" value="1"/>
</dbReference>
<dbReference type="HAMAP" id="MF_00312">
    <property type="entry name" value="ATP_synth_F_arch"/>
    <property type="match status" value="1"/>
</dbReference>
<dbReference type="InterPro" id="IPR008218">
    <property type="entry name" value="ATPase_V1-cplx_f_g_su"/>
</dbReference>
<dbReference type="InterPro" id="IPR022944">
    <property type="entry name" value="ATPase_V1-cplx_fsu_bac/arc"/>
</dbReference>
<dbReference type="InterPro" id="IPR036906">
    <property type="entry name" value="ATPase_V1_fsu_sf"/>
</dbReference>
<dbReference type="NCBIfam" id="NF002577">
    <property type="entry name" value="PRK02228.1"/>
    <property type="match status" value="1"/>
</dbReference>
<dbReference type="Pfam" id="PF01990">
    <property type="entry name" value="ATP-synt_F"/>
    <property type="match status" value="1"/>
</dbReference>
<dbReference type="SUPFAM" id="SSF159468">
    <property type="entry name" value="AtpF-like"/>
    <property type="match status" value="1"/>
</dbReference>
<evidence type="ECO:0000255" key="1">
    <source>
        <dbReference type="HAMAP-Rule" id="MF_00312"/>
    </source>
</evidence>
<evidence type="ECO:0000269" key="2">
    <source>
    </source>
</evidence>
<evidence type="ECO:0000303" key="3">
    <source>
    </source>
</evidence>
<evidence type="ECO:0000305" key="4">
    <source>
    </source>
</evidence>
<evidence type="ECO:0007829" key="5">
    <source>
        <dbReference type="PDB" id="2OV6"/>
    </source>
</evidence>
<reference key="1">
    <citation type="journal article" date="1996" name="J. Biol. Chem.">
        <title>Subunit structure and organization of the genes of the A1A0 ATPase from the Archaeon Methanosarcina mazei Go1.</title>
        <authorList>
            <person name="Wilms R."/>
            <person name="Freiberg C."/>
            <person name="Wegerle E."/>
            <person name="Meier I."/>
            <person name="Mayer F."/>
            <person name="Mueller V."/>
        </authorList>
    </citation>
    <scope>NUCLEOTIDE SEQUENCE [GENOMIC DNA]</scope>
    <scope>FUNCTION</scope>
    <scope>BIOPHYSICOCHEMICAL PROPERTIES</scope>
    <scope>SUBUNIT</scope>
    <scope>SUBCELLULAR LOCATION</scope>
    <source>
        <strain>ATCC BAA-159 / DSM 3647 / Goe1 / Go1 / JCM 11833 / OCM 88</strain>
    </source>
</reference>
<reference key="2">
    <citation type="journal article" date="2002" name="J. Mol. Microbiol. Biotechnol.">
        <title>The genome of Methanosarcina mazei: evidence for lateral gene transfer between Bacteria and Archaea.</title>
        <authorList>
            <person name="Deppenmeier U."/>
            <person name="Johann A."/>
            <person name="Hartsch T."/>
            <person name="Merkl R."/>
            <person name="Schmitz R.A."/>
            <person name="Martinez-Arias R."/>
            <person name="Henne A."/>
            <person name="Wiezer A."/>
            <person name="Baeumer S."/>
            <person name="Jacobi C."/>
            <person name="Brueggemann H."/>
            <person name="Lienard T."/>
            <person name="Christmann A."/>
            <person name="Boemecke M."/>
            <person name="Steckel S."/>
            <person name="Bhattacharyya A."/>
            <person name="Lykidis A."/>
            <person name="Overbeek R."/>
            <person name="Klenk H.-P."/>
            <person name="Gunsalus R.P."/>
            <person name="Fritz H.-J."/>
            <person name="Gottschalk G."/>
        </authorList>
    </citation>
    <scope>NUCLEOTIDE SEQUENCE [LARGE SCALE GENOMIC DNA]</scope>
    <source>
        <strain>ATCC BAA-159 / DSM 3647 / Goe1 / Go1 / JCM 11833 / OCM 88</strain>
    </source>
</reference>
<name>AATF_METMA</name>
<organism>
    <name type="scientific">Methanosarcina mazei (strain ATCC BAA-159 / DSM 3647 / Goe1 / Go1 / JCM 11833 / OCM 88)</name>
    <name type="common">Methanosarcina frisia</name>
    <dbReference type="NCBI Taxonomy" id="192952"/>
    <lineage>
        <taxon>Archaea</taxon>
        <taxon>Methanobacteriati</taxon>
        <taxon>Methanobacteriota</taxon>
        <taxon>Stenosarchaea group</taxon>
        <taxon>Methanomicrobia</taxon>
        <taxon>Methanosarcinales</taxon>
        <taxon>Methanosarcinaceae</taxon>
        <taxon>Methanosarcina</taxon>
    </lineage>
</organism>
<feature type="chain" id="PRO_0000144819" description="A-type ATP synthase subunit F">
    <location>
        <begin position="1"/>
        <end position="101"/>
    </location>
</feature>
<feature type="strand" evidence="5">
    <location>
        <begin position="3"/>
        <end position="7"/>
    </location>
</feature>
<feature type="helix" evidence="5">
    <location>
        <begin position="9"/>
        <end position="18"/>
    </location>
</feature>
<feature type="strand" evidence="5">
    <location>
        <begin position="22"/>
        <end position="25"/>
    </location>
</feature>
<feature type="turn" evidence="5">
    <location>
        <begin position="29"/>
        <end position="31"/>
    </location>
</feature>
<feature type="helix" evidence="5">
    <location>
        <begin position="32"/>
        <end position="42"/>
    </location>
</feature>
<feature type="strand" evidence="5">
    <location>
        <begin position="44"/>
        <end position="51"/>
    </location>
</feature>
<feature type="helix" evidence="5">
    <location>
        <begin position="52"/>
        <end position="55"/>
    </location>
</feature>
<feature type="turn" evidence="5">
    <location>
        <begin position="59"/>
        <end position="62"/>
    </location>
</feature>
<feature type="helix" evidence="5">
    <location>
        <begin position="63"/>
        <end position="69"/>
    </location>
</feature>
<feature type="strand" evidence="5">
    <location>
        <begin position="74"/>
        <end position="77"/>
    </location>
</feature>
<feature type="helix" evidence="5">
    <location>
        <begin position="93"/>
        <end position="95"/>
    </location>
</feature>
<feature type="helix" evidence="5">
    <location>
        <begin position="96"/>
        <end position="100"/>
    </location>
</feature>
<comment type="function">
    <text evidence="1 4">Component of the A-type ATP synthase that produces ATP from ADP in the presence of a proton gradient across the membrane.</text>
</comment>
<comment type="biophysicochemical properties">
    <phDependence>
        <text evidence="2">Optimum pH is 5.2 for ATP hydrolysis.</text>
    </phDependence>
</comment>
<comment type="subunit">
    <text evidence="2">Has multiple subunits, A(3), B(3), C, D, E, F, G, I and K(x); there may be a few other subunits as well.</text>
</comment>
<comment type="subcellular location">
    <subcellularLocation>
        <location evidence="1 2">Cell membrane</location>
        <topology evidence="1 4">Peripheral membrane protein</topology>
    </subcellularLocation>
</comment>
<comment type="miscellaneous">
    <text evidence="4">This organism has both a Na(+)-translocating F1F0 ATP synthase and this H(+)-translocating A1A0 ATP synthase.</text>
</comment>
<comment type="similarity">
    <text evidence="1">Belongs to the V-ATPase F subunit family.</text>
</comment>
<sequence>MELAVIGKSEFVTGFRLAGISKVYETPDIPATESAVRSVLEDKSVGILVMHNDDIGNLPEVLRKNLNESVQPTVVALGGSGSGSTSLREKIKQAVGVDLWK</sequence>
<proteinExistence type="evidence at protein level"/>
<protein>
    <recommendedName>
        <fullName evidence="1">A-type ATP synthase subunit F</fullName>
    </recommendedName>
    <alternativeName>
        <fullName evidence="3">A1A0 ATPase subunit F</fullName>
    </alternativeName>
</protein>
<accession>Q60185</accession>